<organism>
    <name type="scientific">Buchnera aphidicola subsp. Schizaphis graminum (strain Sg)</name>
    <dbReference type="NCBI Taxonomy" id="198804"/>
    <lineage>
        <taxon>Bacteria</taxon>
        <taxon>Pseudomonadati</taxon>
        <taxon>Pseudomonadota</taxon>
        <taxon>Gammaproteobacteria</taxon>
        <taxon>Enterobacterales</taxon>
        <taxon>Erwiniaceae</taxon>
        <taxon>Buchnera</taxon>
    </lineage>
</organism>
<evidence type="ECO:0000250" key="1">
    <source>
        <dbReference type="UniProtKB" id="P0AE52"/>
    </source>
</evidence>
<evidence type="ECO:0000255" key="2">
    <source>
        <dbReference type="PROSITE-ProRule" id="PRU00691"/>
    </source>
</evidence>
<evidence type="ECO:0000305" key="3"/>
<name>BCP_BUCAP</name>
<comment type="function">
    <text evidence="1">Thiol-specific peroxidase that catalyzes the reduction of hydrogen peroxide and organic hydroperoxides to water and alcohols, respectively. Plays a role in cell protection against oxidative stress by detoxifying peroxides and as sensor of hydrogen peroxide-mediated signaling events.</text>
</comment>
<comment type="catalytic activity">
    <reaction evidence="1">
        <text>a hydroperoxide + [thioredoxin]-dithiol = an alcohol + [thioredoxin]-disulfide + H2O</text>
        <dbReference type="Rhea" id="RHEA:62620"/>
        <dbReference type="Rhea" id="RHEA-COMP:10698"/>
        <dbReference type="Rhea" id="RHEA-COMP:10700"/>
        <dbReference type="ChEBI" id="CHEBI:15377"/>
        <dbReference type="ChEBI" id="CHEBI:29950"/>
        <dbReference type="ChEBI" id="CHEBI:30879"/>
        <dbReference type="ChEBI" id="CHEBI:35924"/>
        <dbReference type="ChEBI" id="CHEBI:50058"/>
        <dbReference type="EC" id="1.11.1.24"/>
    </reaction>
</comment>
<comment type="subunit">
    <text evidence="1">Monomer.</text>
</comment>
<comment type="miscellaneous">
    <text evidence="1">The active site is a conserved redox-active cysteine residue, the peroxidatic cysteine (C(P)), which makes the nucleophilic attack on the peroxide substrate. The peroxide oxidizes the C(P)-SH to cysteine sulfenic acid (C(P)-SOH), which then reacts with another cysteine residue, the resolving cysteine (C(R)), to form a disulfide bridge. The disulfide is subsequently reduced by an appropriate electron donor to complete the catalytic cycle. In this atypical 2-Cys peroxiredoxin, C(R) is present in the same subunit to form an intramolecular disulfide. The disulfide is subsequently reduced by thioredoxin.</text>
</comment>
<comment type="similarity">
    <text evidence="3">Belongs to the peroxiredoxin family. BCP/PrxQ subfamily.</text>
</comment>
<keyword id="KW-0049">Antioxidant</keyword>
<keyword id="KW-1015">Disulfide bond</keyword>
<keyword id="KW-0560">Oxidoreductase</keyword>
<keyword id="KW-0575">Peroxidase</keyword>
<keyword id="KW-0676">Redox-active center</keyword>
<dbReference type="EC" id="1.11.1.24" evidence="1"/>
<dbReference type="EMBL" id="AE013218">
    <property type="protein sequence ID" value="AAM67659.1"/>
    <property type="molecule type" value="Genomic_DNA"/>
</dbReference>
<dbReference type="EMBL" id="AF067228">
    <property type="protein sequence ID" value="AAC97351.1"/>
    <property type="molecule type" value="Genomic_DNA"/>
</dbReference>
<dbReference type="RefSeq" id="WP_011053625.1">
    <property type="nucleotide sequence ID" value="NC_004061.1"/>
</dbReference>
<dbReference type="SMR" id="Q9ZHF0"/>
<dbReference type="STRING" id="198804.BUsg_089"/>
<dbReference type="GeneID" id="93003558"/>
<dbReference type="KEGG" id="bas:BUsg_089"/>
<dbReference type="eggNOG" id="COG1225">
    <property type="taxonomic scope" value="Bacteria"/>
</dbReference>
<dbReference type="HOGENOM" id="CLU_042529_14_1_6"/>
<dbReference type="Proteomes" id="UP000000416">
    <property type="component" value="Chromosome"/>
</dbReference>
<dbReference type="GO" id="GO:0005737">
    <property type="term" value="C:cytoplasm"/>
    <property type="evidence" value="ECO:0007669"/>
    <property type="project" value="TreeGrafter"/>
</dbReference>
<dbReference type="GO" id="GO:0008379">
    <property type="term" value="F:thioredoxin peroxidase activity"/>
    <property type="evidence" value="ECO:0007669"/>
    <property type="project" value="TreeGrafter"/>
</dbReference>
<dbReference type="GO" id="GO:0045454">
    <property type="term" value="P:cell redox homeostasis"/>
    <property type="evidence" value="ECO:0007669"/>
    <property type="project" value="TreeGrafter"/>
</dbReference>
<dbReference type="GO" id="GO:0034599">
    <property type="term" value="P:cellular response to oxidative stress"/>
    <property type="evidence" value="ECO:0007669"/>
    <property type="project" value="TreeGrafter"/>
</dbReference>
<dbReference type="CDD" id="cd03017">
    <property type="entry name" value="PRX_BCP"/>
    <property type="match status" value="1"/>
</dbReference>
<dbReference type="FunFam" id="3.40.30.10:FF:000007">
    <property type="entry name" value="Thioredoxin-dependent thiol peroxidase"/>
    <property type="match status" value="1"/>
</dbReference>
<dbReference type="Gene3D" id="3.40.30.10">
    <property type="entry name" value="Glutaredoxin"/>
    <property type="match status" value="1"/>
</dbReference>
<dbReference type="InterPro" id="IPR000866">
    <property type="entry name" value="AhpC/TSA"/>
</dbReference>
<dbReference type="InterPro" id="IPR050924">
    <property type="entry name" value="Peroxiredoxin_BCP/PrxQ"/>
</dbReference>
<dbReference type="InterPro" id="IPR036249">
    <property type="entry name" value="Thioredoxin-like_sf"/>
</dbReference>
<dbReference type="InterPro" id="IPR013766">
    <property type="entry name" value="Thioredoxin_domain"/>
</dbReference>
<dbReference type="NCBIfam" id="NF006960">
    <property type="entry name" value="PRK09437.1"/>
    <property type="match status" value="1"/>
</dbReference>
<dbReference type="PANTHER" id="PTHR42801:SF4">
    <property type="entry name" value="AHPC_TSA FAMILY PROTEIN"/>
    <property type="match status" value="1"/>
</dbReference>
<dbReference type="PANTHER" id="PTHR42801">
    <property type="entry name" value="THIOREDOXIN-DEPENDENT PEROXIDE REDUCTASE"/>
    <property type="match status" value="1"/>
</dbReference>
<dbReference type="Pfam" id="PF00578">
    <property type="entry name" value="AhpC-TSA"/>
    <property type="match status" value="1"/>
</dbReference>
<dbReference type="SUPFAM" id="SSF52833">
    <property type="entry name" value="Thioredoxin-like"/>
    <property type="match status" value="1"/>
</dbReference>
<dbReference type="PROSITE" id="PS51352">
    <property type="entry name" value="THIOREDOXIN_2"/>
    <property type="match status" value="1"/>
</dbReference>
<feature type="chain" id="PRO_0000135133" description="Putative peroxiredoxin bcp">
    <location>
        <begin position="1"/>
        <end position="158"/>
    </location>
</feature>
<feature type="domain" description="Thioredoxin" evidence="2">
    <location>
        <begin position="4"/>
        <end position="157"/>
    </location>
</feature>
<feature type="active site" description="Cysteine sulfenic acid (-SOH) intermediate" evidence="1">
    <location>
        <position position="46"/>
    </location>
</feature>
<feature type="disulfide bond" description="Redox-active" evidence="1">
    <location>
        <begin position="46"/>
        <end position="51"/>
    </location>
</feature>
<accession>Q9ZHF0</accession>
<reference key="1">
    <citation type="journal article" date="2002" name="Science">
        <title>50 million years of genomic stasis in endosymbiotic bacteria.</title>
        <authorList>
            <person name="Tamas I."/>
            <person name="Klasson L."/>
            <person name="Canbaeck B."/>
            <person name="Naeslund A.K."/>
            <person name="Eriksson A.-S."/>
            <person name="Wernegreen J.J."/>
            <person name="Sandstroem J.P."/>
            <person name="Moran N.A."/>
            <person name="Andersson S.G.E."/>
        </authorList>
    </citation>
    <scope>NUCLEOTIDE SEQUENCE [LARGE SCALE GENOMIC DNA]</scope>
    <source>
        <strain>Sg</strain>
    </source>
</reference>
<reference key="2">
    <citation type="journal article" date="1998" name="Curr. Microbiol.">
        <title>Buchnera aphidicola (Aphid endosymbiont) contains genes encoding enzymes of histidine biosynthesis.</title>
        <authorList>
            <person name="Clark M.A."/>
            <person name="Baumann L."/>
            <person name="Baumann P."/>
        </authorList>
    </citation>
    <scope>NUCLEOTIDE SEQUENCE [GENOMIC DNA] OF 122-158</scope>
</reference>
<gene>
    <name type="primary">bcp</name>
    <name type="ordered locus">BUsg_089</name>
</gene>
<protein>
    <recommendedName>
        <fullName>Putative peroxiredoxin bcp</fullName>
        <ecNumber evidence="1">1.11.1.24</ecNumber>
    </recommendedName>
    <alternativeName>
        <fullName>Bacterioferritin comigratory protein</fullName>
    </alternativeName>
    <alternativeName>
        <fullName>Thioredoxin peroxidase</fullName>
    </alternativeName>
    <alternativeName>
        <fullName evidence="3">Thioredoxin-dependent peroxiredoxin Bcp</fullName>
    </alternativeName>
</protein>
<sequence length="158" mass="18138">MTTLKPGDIAPKFILPNCIDKSIKLSDFLGKKVLVYFYPKAMTPGCTVQACNIRDNLELFKSKKVEVLGISPDNTNKLLTFVEKKMLNFTLLSDKQNIVSKKFGVWGEKIFMGKKYFGIYRTSFLINSSGFIDKIFFKFKCKDHHKIILTYLNSKKSD</sequence>
<proteinExistence type="inferred from homology"/>